<keyword id="KW-0238">DNA-binding</keyword>
<keyword id="KW-0539">Nucleus</keyword>
<keyword id="KW-1185">Reference proteome</keyword>
<keyword id="KW-0804">Transcription</keyword>
<keyword id="KW-0805">Transcription regulation</keyword>
<accession>A2YNI2</accession>
<accession>Q6Z4G0</accession>
<accession>Q9M7C5</accession>
<accession>Q9SEV1</accession>
<accession>Q9SMB3</accession>
<gene>
    <name type="primary">MADS18</name>
    <name type="ORF">OsI_025875</name>
</gene>
<sequence>MGRGPVQLRRIENKINRQVTFSKRRNGLLKKAHEISVLCDADVALIVFSTKGKLYEFSSHSSMEGILERYQRYSFDERAVLEPNTEDQENWGDEYGILKSKLDALQKSQRQLLGEQLDTLTIKELQQLEHQLEYSLKHIRSKKNQLLFESISELQKKEKSLKNQNNVLQKLMETEKEKNNAIINTNREEQNGATPSTSSPTPVTAPDPIPTTNNSQSQPRGSGESEAQPSPAQAGNSKLPPWMLRTSHT</sequence>
<organism>
    <name type="scientific">Oryza sativa subsp. indica</name>
    <name type="common">Rice</name>
    <dbReference type="NCBI Taxonomy" id="39946"/>
    <lineage>
        <taxon>Eukaryota</taxon>
        <taxon>Viridiplantae</taxon>
        <taxon>Streptophyta</taxon>
        <taxon>Embryophyta</taxon>
        <taxon>Tracheophyta</taxon>
        <taxon>Spermatophyta</taxon>
        <taxon>Magnoliopsida</taxon>
        <taxon>Liliopsida</taxon>
        <taxon>Poales</taxon>
        <taxon>Poaceae</taxon>
        <taxon>BOP clade</taxon>
        <taxon>Oryzoideae</taxon>
        <taxon>Oryzeae</taxon>
        <taxon>Oryzinae</taxon>
        <taxon>Oryza</taxon>
        <taxon>Oryza sativa</taxon>
    </lineage>
</organism>
<evidence type="ECO:0000255" key="1">
    <source>
        <dbReference type="PROSITE-ProRule" id="PRU00251"/>
    </source>
</evidence>
<evidence type="ECO:0000255" key="2">
    <source>
        <dbReference type="PROSITE-ProRule" id="PRU00629"/>
    </source>
</evidence>
<evidence type="ECO:0000256" key="3">
    <source>
        <dbReference type="SAM" id="MobiDB-lite"/>
    </source>
</evidence>
<evidence type="ECO:0000269" key="4">
    <source>
    </source>
</evidence>
<evidence type="ECO:0000305" key="5"/>
<protein>
    <recommendedName>
        <fullName>MADS-box transcription factor 18</fullName>
    </recommendedName>
    <alternativeName>
        <fullName>FDRMADS7</fullName>
    </alternativeName>
    <alternativeName>
        <fullName>MADS-box protein 2</fullName>
    </alternativeName>
    <alternativeName>
        <fullName>MADS-box protein 28</fullName>
    </alternativeName>
    <alternativeName>
        <fullName>OsMADS18</fullName>
    </alternativeName>
    <alternativeName>
        <fullName>OsMADS2</fullName>
    </alternativeName>
    <alternativeName>
        <fullName>OsMADS28</fullName>
    </alternativeName>
</protein>
<feature type="chain" id="PRO_0000296350" description="MADS-box transcription factor 18">
    <location>
        <begin position="1"/>
        <end position="249"/>
    </location>
</feature>
<feature type="domain" description="MADS-box" evidence="1">
    <location>
        <begin position="1"/>
        <end position="61"/>
    </location>
</feature>
<feature type="domain" description="K-box" evidence="2">
    <location>
        <begin position="88"/>
        <end position="179"/>
    </location>
</feature>
<feature type="region of interest" description="Disordered" evidence="3">
    <location>
        <begin position="184"/>
        <end position="249"/>
    </location>
</feature>
<feature type="compositionally biased region" description="Polar residues" evidence="3">
    <location>
        <begin position="210"/>
        <end position="236"/>
    </location>
</feature>
<feature type="sequence conflict" description="In Ref. 2; AAF66998." evidence="5" ref="2">
    <original>KI</original>
    <variation>TM</variation>
    <location>
        <begin position="14"/>
        <end position="15"/>
    </location>
</feature>
<feature type="sequence conflict" description="In Ref. 2; AAF66998." evidence="5" ref="2">
    <original>S</original>
    <variation>F</variation>
    <location>
        <position position="22"/>
    </location>
</feature>
<name>MAD18_ORYSI</name>
<proteinExistence type="evidence at transcript level"/>
<dbReference type="EMBL" id="CM000132">
    <property type="status" value="NOT_ANNOTATED_CDS"/>
    <property type="molecule type" value="Genomic_DNA"/>
</dbReference>
<dbReference type="EMBL" id="AF139665">
    <property type="protein sequence ID" value="AAF66998.1"/>
    <property type="molecule type" value="mRNA"/>
</dbReference>
<dbReference type="SMR" id="A2YNI2"/>
<dbReference type="STRING" id="39946.A2YNI2"/>
<dbReference type="EnsemblPlants" id="OsLiXu_07g0022530.01">
    <property type="protein sequence ID" value="OsLiXu_07g0022530.01"/>
    <property type="gene ID" value="OsLiXu_07g0022530"/>
</dbReference>
<dbReference type="Gramene" id="OsLiXu_07g0022530.01">
    <property type="protein sequence ID" value="OsLiXu_07g0022530.01"/>
    <property type="gene ID" value="OsLiXu_07g0022530"/>
</dbReference>
<dbReference type="Proteomes" id="UP000007015">
    <property type="component" value="Chromosome 7"/>
</dbReference>
<dbReference type="GO" id="GO:0005634">
    <property type="term" value="C:nucleus"/>
    <property type="evidence" value="ECO:0007669"/>
    <property type="project" value="UniProtKB-SubCell"/>
</dbReference>
<dbReference type="GO" id="GO:0003700">
    <property type="term" value="F:DNA-binding transcription factor activity"/>
    <property type="evidence" value="ECO:0007669"/>
    <property type="project" value="InterPro"/>
</dbReference>
<dbReference type="GO" id="GO:0046983">
    <property type="term" value="F:protein dimerization activity"/>
    <property type="evidence" value="ECO:0007669"/>
    <property type="project" value="InterPro"/>
</dbReference>
<dbReference type="GO" id="GO:0000977">
    <property type="term" value="F:RNA polymerase II transcription regulatory region sequence-specific DNA binding"/>
    <property type="evidence" value="ECO:0007669"/>
    <property type="project" value="InterPro"/>
</dbReference>
<dbReference type="GO" id="GO:0045944">
    <property type="term" value="P:positive regulation of transcription by RNA polymerase II"/>
    <property type="evidence" value="ECO:0007669"/>
    <property type="project" value="InterPro"/>
</dbReference>
<dbReference type="CDD" id="cd00265">
    <property type="entry name" value="MADS_MEF2_like"/>
    <property type="match status" value="1"/>
</dbReference>
<dbReference type="FunFam" id="3.40.1810.10:FF:000003">
    <property type="entry name" value="MADS-box transcription factor MADS-MC"/>
    <property type="match status" value="1"/>
</dbReference>
<dbReference type="Gene3D" id="3.40.1810.10">
    <property type="entry name" value="Transcription factor, MADS-box"/>
    <property type="match status" value="1"/>
</dbReference>
<dbReference type="InterPro" id="IPR050142">
    <property type="entry name" value="MADS-box/MEF2_TF"/>
</dbReference>
<dbReference type="InterPro" id="IPR033896">
    <property type="entry name" value="MEF2-like_N"/>
</dbReference>
<dbReference type="InterPro" id="IPR002487">
    <property type="entry name" value="TF_Kbox"/>
</dbReference>
<dbReference type="InterPro" id="IPR002100">
    <property type="entry name" value="TF_MADSbox"/>
</dbReference>
<dbReference type="InterPro" id="IPR036879">
    <property type="entry name" value="TF_MADSbox_sf"/>
</dbReference>
<dbReference type="PANTHER" id="PTHR48019">
    <property type="entry name" value="SERUM RESPONSE FACTOR HOMOLOG"/>
    <property type="match status" value="1"/>
</dbReference>
<dbReference type="Pfam" id="PF01486">
    <property type="entry name" value="K-box"/>
    <property type="match status" value="1"/>
</dbReference>
<dbReference type="Pfam" id="PF00319">
    <property type="entry name" value="SRF-TF"/>
    <property type="match status" value="1"/>
</dbReference>
<dbReference type="PRINTS" id="PR00404">
    <property type="entry name" value="MADSDOMAIN"/>
</dbReference>
<dbReference type="SMART" id="SM00432">
    <property type="entry name" value="MADS"/>
    <property type="match status" value="1"/>
</dbReference>
<dbReference type="SUPFAM" id="SSF55455">
    <property type="entry name" value="SRF-like"/>
    <property type="match status" value="1"/>
</dbReference>
<dbReference type="PROSITE" id="PS51297">
    <property type="entry name" value="K_BOX"/>
    <property type="match status" value="1"/>
</dbReference>
<dbReference type="PROSITE" id="PS50066">
    <property type="entry name" value="MADS_BOX_2"/>
    <property type="match status" value="1"/>
</dbReference>
<reference key="1">
    <citation type="journal article" date="2005" name="PLoS Biol.">
        <title>The genomes of Oryza sativa: a history of duplications.</title>
        <authorList>
            <person name="Yu J."/>
            <person name="Wang J."/>
            <person name="Lin W."/>
            <person name="Li S."/>
            <person name="Li H."/>
            <person name="Zhou J."/>
            <person name="Ni P."/>
            <person name="Dong W."/>
            <person name="Hu S."/>
            <person name="Zeng C."/>
            <person name="Zhang J."/>
            <person name="Zhang Y."/>
            <person name="Li R."/>
            <person name="Xu Z."/>
            <person name="Li S."/>
            <person name="Li X."/>
            <person name="Zheng H."/>
            <person name="Cong L."/>
            <person name="Lin L."/>
            <person name="Yin J."/>
            <person name="Geng J."/>
            <person name="Li G."/>
            <person name="Shi J."/>
            <person name="Liu J."/>
            <person name="Lv H."/>
            <person name="Li J."/>
            <person name="Wang J."/>
            <person name="Deng Y."/>
            <person name="Ran L."/>
            <person name="Shi X."/>
            <person name="Wang X."/>
            <person name="Wu Q."/>
            <person name="Li C."/>
            <person name="Ren X."/>
            <person name="Wang J."/>
            <person name="Wang X."/>
            <person name="Li D."/>
            <person name="Liu D."/>
            <person name="Zhang X."/>
            <person name="Ji Z."/>
            <person name="Zhao W."/>
            <person name="Sun Y."/>
            <person name="Zhang Z."/>
            <person name="Bao J."/>
            <person name="Han Y."/>
            <person name="Dong L."/>
            <person name="Ji J."/>
            <person name="Chen P."/>
            <person name="Wu S."/>
            <person name="Liu J."/>
            <person name="Xiao Y."/>
            <person name="Bu D."/>
            <person name="Tan J."/>
            <person name="Yang L."/>
            <person name="Ye C."/>
            <person name="Zhang J."/>
            <person name="Xu J."/>
            <person name="Zhou Y."/>
            <person name="Yu Y."/>
            <person name="Zhang B."/>
            <person name="Zhuang S."/>
            <person name="Wei H."/>
            <person name="Liu B."/>
            <person name="Lei M."/>
            <person name="Yu H."/>
            <person name="Li Y."/>
            <person name="Xu H."/>
            <person name="Wei S."/>
            <person name="He X."/>
            <person name="Fang L."/>
            <person name="Zhang Z."/>
            <person name="Zhang Y."/>
            <person name="Huang X."/>
            <person name="Su Z."/>
            <person name="Tong W."/>
            <person name="Li J."/>
            <person name="Tong Z."/>
            <person name="Li S."/>
            <person name="Ye J."/>
            <person name="Wang L."/>
            <person name="Fang L."/>
            <person name="Lei T."/>
            <person name="Chen C.-S."/>
            <person name="Chen H.-C."/>
            <person name="Xu Z."/>
            <person name="Li H."/>
            <person name="Huang H."/>
            <person name="Zhang F."/>
            <person name="Xu H."/>
            <person name="Li N."/>
            <person name="Zhao C."/>
            <person name="Li S."/>
            <person name="Dong L."/>
            <person name="Huang Y."/>
            <person name="Li L."/>
            <person name="Xi Y."/>
            <person name="Qi Q."/>
            <person name="Li W."/>
            <person name="Zhang B."/>
            <person name="Hu W."/>
            <person name="Zhang Y."/>
            <person name="Tian X."/>
            <person name="Jiao Y."/>
            <person name="Liang X."/>
            <person name="Jin J."/>
            <person name="Gao L."/>
            <person name="Zheng W."/>
            <person name="Hao B."/>
            <person name="Liu S.-M."/>
            <person name="Wang W."/>
            <person name="Yuan L."/>
            <person name="Cao M."/>
            <person name="McDermott J."/>
            <person name="Samudrala R."/>
            <person name="Wang J."/>
            <person name="Wong G.K.-S."/>
            <person name="Yang H."/>
        </authorList>
    </citation>
    <scope>NUCLEOTIDE SEQUENCE [LARGE SCALE GENOMIC DNA]</scope>
    <source>
        <strain>cv. 93-11</strain>
    </source>
</reference>
<reference key="2">
    <citation type="journal article" date="2000" name="Plant Sci.">
        <title>Characterization and transcriptional profiles of two rice MADS-box genes.</title>
        <authorList>
            <person name="Jia H.-W."/>
            <person name="Chen R."/>
            <person name="Cong B."/>
            <person name="Cao K.-M."/>
            <person name="Sun C.-R."/>
            <person name="Luo D."/>
        </authorList>
    </citation>
    <scope>NUCLEOTIDE SEQUENCE [MRNA] OF 12-249</scope>
    <scope>TISSUE SPECIFICITY</scope>
    <source>
        <strain>cv. Guang-Lu-Ai No.4</strain>
    </source>
</reference>
<comment type="function">
    <text>Probable transcription factor.</text>
</comment>
<comment type="subcellular location">
    <subcellularLocation>
        <location evidence="5">Nucleus</location>
    </subcellularLocation>
</comment>
<comment type="tissue specificity">
    <text evidence="4">Widely expressed. Transcripts accumulate to higher levels in organs that retain meristematic characteristics: in the apical meristem and in the meristematic leaf primordia formed on its flank; in the developing panicle at the early stage of rachis-branch primordia differentiation; in the procambium of the rachis branches and in all floral organ primordia.</text>
</comment>